<sequence length="906" mass="98543">MDKVKIQEIAEEAGLSNGELIEKAKELGFNVKAANSAISMDDAGILVDFAISGTLPKGFKKPGEKPKLKVVKKKTVEKEPETIVEAPVIEKETAPEKTEVIPEETENTVEESTAAETVESEPETAVIEEIETPAETAKEETVEAAPVVKEVKQRKGISVVSKKAESEAEKGTEIEKPKRRTLSRTGIKIVRKAKPAPVRAATRISMGSGAPTPPSKKKVKKGPAEARETGKKIDIFNHDSMSGDIDSGFGEEEVVLLDFSDKNIYEDMMRQEQKRREEAKKREAANGGPAKGRQPFRPQQRRSLKRGGKRKKYTKEESSEVITSVEIPENVRVYEFAEKVNRSVGEVVKVLFALGMMVTKNDFLSKDEIEILAEEFGVEVSTMNPLDELDYVQAYDEVEDTHLEERPPVITIMGHVDHGKTSLLDKIRSAKVADKEAGGITQHVGAYQVEKNGKKITFVDTPGHEAFTEMRARGAQATDIVIIVVAADDGVMPQTKEAIAHTKAAGVPMIIAMNKMDKESANPDNIKSQLAEIDVMAADWGGEYEFVPVSAHTGLGIDDLLETILLQAEMMELKADPTRKAKAVVVESSVEKGFGPVANVIIKNGTLHVGDNVIVGTTYGRIKAIKLDDGSAVKEIGPSTPAAIVGLNEVPGAGEALVAMDTDKEVRELAEKRAEYDRAKQLSKSTKASLDDLSALIAEGQLKSLPVIIKADVQGSLEAIKGSLEKLRNEEVKVNIIHEGVGGVTESDVTLADASEHAVILGFNVRPTGSVKKKAKELGVEVRTYTIIYDLLDDVKALLGGMMSPVIKEEVTGQAEVRETFVVGKVGTIAGCKVSDGVITRNSKARLIRDGVVVYESKISSLKRFNEDAREVKNGYECGIMLENFNDIKEGDVIETFKDVEEQVTL</sequence>
<dbReference type="EMBL" id="AP009179">
    <property type="protein sequence ID" value="BAF72914.1"/>
    <property type="molecule type" value="Genomic_DNA"/>
</dbReference>
<dbReference type="RefSeq" id="WP_012083734.1">
    <property type="nucleotide sequence ID" value="NC_009663.1"/>
</dbReference>
<dbReference type="SMR" id="A6QBQ5"/>
<dbReference type="STRING" id="387093.SUN_1971"/>
<dbReference type="KEGG" id="sun:SUN_1971"/>
<dbReference type="eggNOG" id="COG0532">
    <property type="taxonomic scope" value="Bacteria"/>
</dbReference>
<dbReference type="HOGENOM" id="CLU_006301_4_1_7"/>
<dbReference type="OrthoDB" id="9811804at2"/>
<dbReference type="Proteomes" id="UP000006378">
    <property type="component" value="Chromosome"/>
</dbReference>
<dbReference type="GO" id="GO:0005829">
    <property type="term" value="C:cytosol"/>
    <property type="evidence" value="ECO:0007669"/>
    <property type="project" value="TreeGrafter"/>
</dbReference>
<dbReference type="GO" id="GO:0005525">
    <property type="term" value="F:GTP binding"/>
    <property type="evidence" value="ECO:0007669"/>
    <property type="project" value="UniProtKB-KW"/>
</dbReference>
<dbReference type="GO" id="GO:0003924">
    <property type="term" value="F:GTPase activity"/>
    <property type="evidence" value="ECO:0007669"/>
    <property type="project" value="UniProtKB-UniRule"/>
</dbReference>
<dbReference type="GO" id="GO:0003743">
    <property type="term" value="F:translation initiation factor activity"/>
    <property type="evidence" value="ECO:0007669"/>
    <property type="project" value="UniProtKB-UniRule"/>
</dbReference>
<dbReference type="CDD" id="cd01887">
    <property type="entry name" value="IF2_eIF5B"/>
    <property type="match status" value="1"/>
</dbReference>
<dbReference type="CDD" id="cd03702">
    <property type="entry name" value="IF2_mtIF2_II"/>
    <property type="match status" value="1"/>
</dbReference>
<dbReference type="CDD" id="cd03692">
    <property type="entry name" value="mtIF2_IVc"/>
    <property type="match status" value="1"/>
</dbReference>
<dbReference type="FunFam" id="2.40.30.10:FF:000008">
    <property type="entry name" value="Translation initiation factor IF-2"/>
    <property type="match status" value="1"/>
</dbReference>
<dbReference type="FunFam" id="2.40.30.10:FF:000054">
    <property type="entry name" value="Translation initiation factor IF-2"/>
    <property type="match status" value="1"/>
</dbReference>
<dbReference type="FunFam" id="3.40.50.10050:FF:000001">
    <property type="entry name" value="Translation initiation factor IF-2"/>
    <property type="match status" value="1"/>
</dbReference>
<dbReference type="FunFam" id="3.40.50.300:FF:000019">
    <property type="entry name" value="Translation initiation factor IF-2"/>
    <property type="match status" value="1"/>
</dbReference>
<dbReference type="Gene3D" id="1.10.10.2480">
    <property type="match status" value="1"/>
</dbReference>
<dbReference type="Gene3D" id="3.40.50.300">
    <property type="entry name" value="P-loop containing nucleotide triphosphate hydrolases"/>
    <property type="match status" value="1"/>
</dbReference>
<dbReference type="Gene3D" id="2.40.30.10">
    <property type="entry name" value="Translation factors"/>
    <property type="match status" value="2"/>
</dbReference>
<dbReference type="Gene3D" id="3.40.50.10050">
    <property type="entry name" value="Translation initiation factor IF- 2, domain 3"/>
    <property type="match status" value="1"/>
</dbReference>
<dbReference type="HAMAP" id="MF_00100_B">
    <property type="entry name" value="IF_2_B"/>
    <property type="match status" value="1"/>
</dbReference>
<dbReference type="InterPro" id="IPR053905">
    <property type="entry name" value="EF-G-like_DII"/>
</dbReference>
<dbReference type="InterPro" id="IPR004161">
    <property type="entry name" value="EFTu-like_2"/>
</dbReference>
<dbReference type="InterPro" id="IPR044145">
    <property type="entry name" value="IF2_II"/>
</dbReference>
<dbReference type="InterPro" id="IPR006847">
    <property type="entry name" value="IF2_N"/>
</dbReference>
<dbReference type="InterPro" id="IPR027417">
    <property type="entry name" value="P-loop_NTPase"/>
</dbReference>
<dbReference type="InterPro" id="IPR005225">
    <property type="entry name" value="Small_GTP-bd"/>
</dbReference>
<dbReference type="InterPro" id="IPR000795">
    <property type="entry name" value="T_Tr_GTP-bd_dom"/>
</dbReference>
<dbReference type="InterPro" id="IPR000178">
    <property type="entry name" value="TF_IF2_bacterial-like"/>
</dbReference>
<dbReference type="InterPro" id="IPR015760">
    <property type="entry name" value="TIF_IF2"/>
</dbReference>
<dbReference type="InterPro" id="IPR023115">
    <property type="entry name" value="TIF_IF2_dom3"/>
</dbReference>
<dbReference type="InterPro" id="IPR036925">
    <property type="entry name" value="TIF_IF2_dom3_sf"/>
</dbReference>
<dbReference type="InterPro" id="IPR009000">
    <property type="entry name" value="Transl_B-barrel_sf"/>
</dbReference>
<dbReference type="NCBIfam" id="TIGR00487">
    <property type="entry name" value="IF-2"/>
    <property type="match status" value="1"/>
</dbReference>
<dbReference type="NCBIfam" id="TIGR00231">
    <property type="entry name" value="small_GTP"/>
    <property type="match status" value="1"/>
</dbReference>
<dbReference type="PANTHER" id="PTHR43381:SF5">
    <property type="entry name" value="TR-TYPE G DOMAIN-CONTAINING PROTEIN"/>
    <property type="match status" value="1"/>
</dbReference>
<dbReference type="PANTHER" id="PTHR43381">
    <property type="entry name" value="TRANSLATION INITIATION FACTOR IF-2-RELATED"/>
    <property type="match status" value="1"/>
</dbReference>
<dbReference type="Pfam" id="PF22042">
    <property type="entry name" value="EF-G_D2"/>
    <property type="match status" value="1"/>
</dbReference>
<dbReference type="Pfam" id="PF00009">
    <property type="entry name" value="GTP_EFTU"/>
    <property type="match status" value="1"/>
</dbReference>
<dbReference type="Pfam" id="PF03144">
    <property type="entry name" value="GTP_EFTU_D2"/>
    <property type="match status" value="1"/>
</dbReference>
<dbReference type="Pfam" id="PF11987">
    <property type="entry name" value="IF-2"/>
    <property type="match status" value="1"/>
</dbReference>
<dbReference type="Pfam" id="PF04760">
    <property type="entry name" value="IF2_N"/>
    <property type="match status" value="2"/>
</dbReference>
<dbReference type="SUPFAM" id="SSF52156">
    <property type="entry name" value="Initiation factor IF2/eIF5b, domain 3"/>
    <property type="match status" value="1"/>
</dbReference>
<dbReference type="SUPFAM" id="SSF52540">
    <property type="entry name" value="P-loop containing nucleoside triphosphate hydrolases"/>
    <property type="match status" value="1"/>
</dbReference>
<dbReference type="SUPFAM" id="SSF50447">
    <property type="entry name" value="Translation proteins"/>
    <property type="match status" value="2"/>
</dbReference>
<dbReference type="PROSITE" id="PS51722">
    <property type="entry name" value="G_TR_2"/>
    <property type="match status" value="1"/>
</dbReference>
<keyword id="KW-0963">Cytoplasm</keyword>
<keyword id="KW-0342">GTP-binding</keyword>
<keyword id="KW-0396">Initiation factor</keyword>
<keyword id="KW-0547">Nucleotide-binding</keyword>
<keyword id="KW-0648">Protein biosynthesis</keyword>
<accession>A6QBQ5</accession>
<proteinExistence type="inferred from homology"/>
<evidence type="ECO:0000250" key="1"/>
<evidence type="ECO:0000255" key="2">
    <source>
        <dbReference type="HAMAP-Rule" id="MF_00100"/>
    </source>
</evidence>
<evidence type="ECO:0000256" key="3">
    <source>
        <dbReference type="SAM" id="MobiDB-lite"/>
    </source>
</evidence>
<reference key="1">
    <citation type="journal article" date="2007" name="Proc. Natl. Acad. Sci. U.S.A.">
        <title>Deep-sea vent epsilon-proteobacterial genomes provide insights into emergence of pathogens.</title>
        <authorList>
            <person name="Nakagawa S."/>
            <person name="Takaki Y."/>
            <person name="Shimamura S."/>
            <person name="Reysenbach A.-L."/>
            <person name="Takai K."/>
            <person name="Horikoshi K."/>
        </authorList>
    </citation>
    <scope>NUCLEOTIDE SEQUENCE [LARGE SCALE GENOMIC DNA]</scope>
    <source>
        <strain>NBC37-1</strain>
    </source>
</reference>
<feature type="chain" id="PRO_1000008358" description="Translation initiation factor IF-2">
    <location>
        <begin position="1"/>
        <end position="906"/>
    </location>
</feature>
<feature type="domain" description="tr-type G">
    <location>
        <begin position="405"/>
        <end position="574"/>
    </location>
</feature>
<feature type="region of interest" description="Disordered" evidence="3">
    <location>
        <begin position="94"/>
        <end position="125"/>
    </location>
</feature>
<feature type="region of interest" description="Disordered" evidence="3">
    <location>
        <begin position="165"/>
        <end position="232"/>
    </location>
</feature>
<feature type="region of interest" description="Disordered" evidence="3">
    <location>
        <begin position="270"/>
        <end position="321"/>
    </location>
</feature>
<feature type="region of interest" description="G1" evidence="1">
    <location>
        <begin position="414"/>
        <end position="421"/>
    </location>
</feature>
<feature type="region of interest" description="G2" evidence="1">
    <location>
        <begin position="439"/>
        <end position="443"/>
    </location>
</feature>
<feature type="region of interest" description="G3" evidence="1">
    <location>
        <begin position="460"/>
        <end position="463"/>
    </location>
</feature>
<feature type="region of interest" description="G4" evidence="1">
    <location>
        <begin position="514"/>
        <end position="517"/>
    </location>
</feature>
<feature type="region of interest" description="G5" evidence="1">
    <location>
        <begin position="550"/>
        <end position="552"/>
    </location>
</feature>
<feature type="compositionally biased region" description="Basic and acidic residues" evidence="3">
    <location>
        <begin position="165"/>
        <end position="176"/>
    </location>
</feature>
<feature type="compositionally biased region" description="Basic and acidic residues" evidence="3">
    <location>
        <begin position="222"/>
        <end position="232"/>
    </location>
</feature>
<feature type="compositionally biased region" description="Basic and acidic residues" evidence="3">
    <location>
        <begin position="270"/>
        <end position="284"/>
    </location>
</feature>
<feature type="compositionally biased region" description="Basic residues" evidence="3">
    <location>
        <begin position="299"/>
        <end position="313"/>
    </location>
</feature>
<feature type="binding site" evidence="2">
    <location>
        <begin position="414"/>
        <end position="421"/>
    </location>
    <ligand>
        <name>GTP</name>
        <dbReference type="ChEBI" id="CHEBI:37565"/>
    </ligand>
</feature>
<feature type="binding site" evidence="2">
    <location>
        <begin position="460"/>
        <end position="464"/>
    </location>
    <ligand>
        <name>GTP</name>
        <dbReference type="ChEBI" id="CHEBI:37565"/>
    </ligand>
</feature>
<feature type="binding site" evidence="2">
    <location>
        <begin position="514"/>
        <end position="517"/>
    </location>
    <ligand>
        <name>GTP</name>
        <dbReference type="ChEBI" id="CHEBI:37565"/>
    </ligand>
</feature>
<gene>
    <name evidence="2" type="primary">infB</name>
    <name type="ordered locus">SUN_1971</name>
</gene>
<organism>
    <name type="scientific">Sulfurovum sp. (strain NBC37-1)</name>
    <dbReference type="NCBI Taxonomy" id="387093"/>
    <lineage>
        <taxon>Bacteria</taxon>
        <taxon>Pseudomonadati</taxon>
        <taxon>Campylobacterota</taxon>
        <taxon>Epsilonproteobacteria</taxon>
        <taxon>Campylobacterales</taxon>
        <taxon>Sulfurovaceae</taxon>
        <taxon>Sulfurovum</taxon>
    </lineage>
</organism>
<name>IF2_SULNB</name>
<comment type="function">
    <text evidence="2">One of the essential components for the initiation of protein synthesis. Protects formylmethionyl-tRNA from spontaneous hydrolysis and promotes its binding to the 30S ribosomal subunits. Also involved in the hydrolysis of GTP during the formation of the 70S ribosomal complex.</text>
</comment>
<comment type="subcellular location">
    <subcellularLocation>
        <location evidence="2">Cytoplasm</location>
    </subcellularLocation>
</comment>
<comment type="similarity">
    <text evidence="2">Belongs to the TRAFAC class translation factor GTPase superfamily. Classic translation factor GTPase family. IF-2 subfamily.</text>
</comment>
<protein>
    <recommendedName>
        <fullName evidence="2">Translation initiation factor IF-2</fullName>
    </recommendedName>
</protein>